<protein>
    <recommendedName>
        <fullName evidence="1">Flagellar hook-basal body complex protein FliE</fullName>
    </recommendedName>
</protein>
<name>FLIE_HALH5</name>
<keyword id="KW-0975">Bacterial flagellum</keyword>
<keyword id="KW-1185">Reference proteome</keyword>
<sequence>MAEIQTVTAPVFLNQANSSSVNKHTPAEAQETFKQALSQAINNVNDLQKVSAEKTELLAKGKIEDLHDVMITGQKASITLSATVEIRNKVIEAYQEIMRMQV</sequence>
<dbReference type="EMBL" id="BA000004">
    <property type="protein sequence ID" value="BAB06178.1"/>
    <property type="molecule type" value="Genomic_DNA"/>
</dbReference>
<dbReference type="PIR" id="C83957">
    <property type="entry name" value="C83957"/>
</dbReference>
<dbReference type="RefSeq" id="WP_010898612.1">
    <property type="nucleotide sequence ID" value="NC_002570.2"/>
</dbReference>
<dbReference type="SMR" id="Q9KA31"/>
<dbReference type="STRING" id="272558.gene:10728357"/>
<dbReference type="GeneID" id="87597979"/>
<dbReference type="KEGG" id="bha:BH2459"/>
<dbReference type="eggNOG" id="COG1677">
    <property type="taxonomic scope" value="Bacteria"/>
</dbReference>
<dbReference type="HOGENOM" id="CLU_147249_3_4_9"/>
<dbReference type="OrthoDB" id="9812413at2"/>
<dbReference type="Proteomes" id="UP000001258">
    <property type="component" value="Chromosome"/>
</dbReference>
<dbReference type="GO" id="GO:0009425">
    <property type="term" value="C:bacterial-type flagellum basal body"/>
    <property type="evidence" value="ECO:0007669"/>
    <property type="project" value="UniProtKB-SubCell"/>
</dbReference>
<dbReference type="GO" id="GO:0003774">
    <property type="term" value="F:cytoskeletal motor activity"/>
    <property type="evidence" value="ECO:0007669"/>
    <property type="project" value="InterPro"/>
</dbReference>
<dbReference type="GO" id="GO:0005198">
    <property type="term" value="F:structural molecule activity"/>
    <property type="evidence" value="ECO:0007669"/>
    <property type="project" value="InterPro"/>
</dbReference>
<dbReference type="GO" id="GO:0071973">
    <property type="term" value="P:bacterial-type flagellum-dependent cell motility"/>
    <property type="evidence" value="ECO:0007669"/>
    <property type="project" value="InterPro"/>
</dbReference>
<dbReference type="HAMAP" id="MF_00724">
    <property type="entry name" value="FliE"/>
    <property type="match status" value="1"/>
</dbReference>
<dbReference type="InterPro" id="IPR001624">
    <property type="entry name" value="FliE"/>
</dbReference>
<dbReference type="NCBIfam" id="TIGR00205">
    <property type="entry name" value="fliE"/>
    <property type="match status" value="1"/>
</dbReference>
<dbReference type="PANTHER" id="PTHR34653">
    <property type="match status" value="1"/>
</dbReference>
<dbReference type="PANTHER" id="PTHR34653:SF1">
    <property type="entry name" value="FLAGELLAR HOOK-BASAL BODY COMPLEX PROTEIN FLIE"/>
    <property type="match status" value="1"/>
</dbReference>
<dbReference type="Pfam" id="PF02049">
    <property type="entry name" value="FliE"/>
    <property type="match status" value="1"/>
</dbReference>
<dbReference type="PRINTS" id="PR01006">
    <property type="entry name" value="FLGHOOKFLIE"/>
</dbReference>
<accession>Q9KA31</accession>
<feature type="chain" id="PRO_0000105528" description="Flagellar hook-basal body complex protein FliE">
    <location>
        <begin position="1"/>
        <end position="102"/>
    </location>
</feature>
<evidence type="ECO:0000255" key="1">
    <source>
        <dbReference type="HAMAP-Rule" id="MF_00724"/>
    </source>
</evidence>
<reference key="1">
    <citation type="journal article" date="2000" name="Nucleic Acids Res.">
        <title>Complete genome sequence of the alkaliphilic bacterium Bacillus halodurans and genomic sequence comparison with Bacillus subtilis.</title>
        <authorList>
            <person name="Takami H."/>
            <person name="Nakasone K."/>
            <person name="Takaki Y."/>
            <person name="Maeno G."/>
            <person name="Sasaki R."/>
            <person name="Masui N."/>
            <person name="Fuji F."/>
            <person name="Hirama C."/>
            <person name="Nakamura Y."/>
            <person name="Ogasawara N."/>
            <person name="Kuhara S."/>
            <person name="Horikoshi K."/>
        </authorList>
    </citation>
    <scope>NUCLEOTIDE SEQUENCE [LARGE SCALE GENOMIC DNA]</scope>
    <source>
        <strain>ATCC BAA-125 / DSM 18197 / FERM 7344 / JCM 9153 / C-125</strain>
    </source>
</reference>
<gene>
    <name evidence="1" type="primary">fliE</name>
    <name type="ordered locus">BH2459</name>
</gene>
<comment type="subcellular location">
    <subcellularLocation>
        <location evidence="1">Bacterial flagellum basal body</location>
    </subcellularLocation>
</comment>
<comment type="similarity">
    <text evidence="1">Belongs to the FliE family.</text>
</comment>
<proteinExistence type="inferred from homology"/>
<organism>
    <name type="scientific">Halalkalibacterium halodurans (strain ATCC BAA-125 / DSM 18197 / FERM 7344 / JCM 9153 / C-125)</name>
    <name type="common">Bacillus halodurans</name>
    <dbReference type="NCBI Taxonomy" id="272558"/>
    <lineage>
        <taxon>Bacteria</taxon>
        <taxon>Bacillati</taxon>
        <taxon>Bacillota</taxon>
        <taxon>Bacilli</taxon>
        <taxon>Bacillales</taxon>
        <taxon>Bacillaceae</taxon>
        <taxon>Halalkalibacterium (ex Joshi et al. 2022)</taxon>
    </lineage>
</organism>